<organism>
    <name type="scientific">Synechococcus sp. (strain JA-3-3Ab)</name>
    <name type="common">Cyanobacteria bacterium Yellowstone A-Prime</name>
    <dbReference type="NCBI Taxonomy" id="321327"/>
    <lineage>
        <taxon>Bacteria</taxon>
        <taxon>Bacillati</taxon>
        <taxon>Cyanobacteriota</taxon>
        <taxon>Cyanophyceae</taxon>
        <taxon>Synechococcales</taxon>
        <taxon>Synechococcaceae</taxon>
        <taxon>Synechococcus</taxon>
    </lineage>
</organism>
<sequence>MQRSQRLSQMLFVTLREDPAEAELISHKLLLRGGFIRRLSPGIYTYLPLLWRVLQKISDIVREEMNAIGAQECLLPQLQPAEIWRESGRWDVYTQAEGIMFALKDRQGREQALGPTHEEVITLLARDLIRSYRQLPQILYQIQTKFRDEIRPRFGLLRGREFLMKDAYSFHANEESLRQTYQDMYRAYGRILRRCGLEFCVVEADAGAIGGPSAASQEFMVLASAGEDEILYTPDGSYAANVEKAVSLPPPAADSPYTTFQVLDTPGTETIEKLANFLKISPTLIVKNVLYQALYDNGLRVVVLLSIRGDQEVNEVKLANHLNRLAERYQANKLLKLTLADAEIQKSWQGDPIPVGYIAPDLPDSCLGRQKNLAPQILRLADQTAALLKNFVTGSNQVGRHVVGANWGEQYPLAEVVDVRKAQAGDRCLLNPDQILETARGIEIGHIFQLGLKFSLPMRASFTDEQGSEQPLWMGCYGIGVSRLAQAAVEQSHDANGIIWPVAIAPYHVVVVVPNVSDPEQTKVAEKLVQELAAAGIETLWDDRDERAGVKFKDADLIGIPYRLTTGRSLKQGKVELAERATGQAVEIPIEEVVATLKERIAAALAVPD</sequence>
<gene>
    <name evidence="1" type="primary">proS</name>
    <name type="ordered locus">CYA_2339</name>
</gene>
<evidence type="ECO:0000255" key="1">
    <source>
        <dbReference type="HAMAP-Rule" id="MF_01569"/>
    </source>
</evidence>
<protein>
    <recommendedName>
        <fullName evidence="1">Proline--tRNA ligase</fullName>
        <ecNumber evidence="1">6.1.1.15</ecNumber>
    </recommendedName>
    <alternativeName>
        <fullName evidence="1">Prolyl-tRNA synthetase</fullName>
        <shortName evidence="1">ProRS</shortName>
    </alternativeName>
</protein>
<comment type="function">
    <text evidence="1">Catalyzes the attachment of proline to tRNA(Pro) in a two-step reaction: proline is first activated by ATP to form Pro-AMP and then transferred to the acceptor end of tRNA(Pro). As ProRS can inadvertently accommodate and process non-cognate amino acids such as alanine and cysteine, to avoid such errors it has two additional distinct editing activities against alanine. One activity is designated as 'pretransfer' editing and involves the tRNA(Pro)-independent hydrolysis of activated Ala-AMP. The other activity is designated 'posttransfer' editing and involves deacylation of mischarged Ala-tRNA(Pro). The misacylated Cys-tRNA(Pro) is not edited by ProRS.</text>
</comment>
<comment type="catalytic activity">
    <reaction evidence="1">
        <text>tRNA(Pro) + L-proline + ATP = L-prolyl-tRNA(Pro) + AMP + diphosphate</text>
        <dbReference type="Rhea" id="RHEA:14305"/>
        <dbReference type="Rhea" id="RHEA-COMP:9700"/>
        <dbReference type="Rhea" id="RHEA-COMP:9702"/>
        <dbReference type="ChEBI" id="CHEBI:30616"/>
        <dbReference type="ChEBI" id="CHEBI:33019"/>
        <dbReference type="ChEBI" id="CHEBI:60039"/>
        <dbReference type="ChEBI" id="CHEBI:78442"/>
        <dbReference type="ChEBI" id="CHEBI:78532"/>
        <dbReference type="ChEBI" id="CHEBI:456215"/>
        <dbReference type="EC" id="6.1.1.15"/>
    </reaction>
</comment>
<comment type="subunit">
    <text evidence="1">Homodimer.</text>
</comment>
<comment type="subcellular location">
    <subcellularLocation>
        <location evidence="1">Cytoplasm</location>
    </subcellularLocation>
</comment>
<comment type="domain">
    <text evidence="1">Consists of three domains: the N-terminal catalytic domain, the editing domain and the C-terminal anticodon-binding domain.</text>
</comment>
<comment type="similarity">
    <text evidence="1">Belongs to the class-II aminoacyl-tRNA synthetase family. ProS type 1 subfamily.</text>
</comment>
<feature type="chain" id="PRO_0000248796" description="Proline--tRNA ligase">
    <location>
        <begin position="1"/>
        <end position="609"/>
    </location>
</feature>
<dbReference type="EC" id="6.1.1.15" evidence="1"/>
<dbReference type="EMBL" id="CP000239">
    <property type="protein sequence ID" value="ABD00466.1"/>
    <property type="molecule type" value="Genomic_DNA"/>
</dbReference>
<dbReference type="RefSeq" id="WP_011431139.1">
    <property type="nucleotide sequence ID" value="NC_007775.1"/>
</dbReference>
<dbReference type="SMR" id="Q2JSB6"/>
<dbReference type="STRING" id="321327.CYA_2339"/>
<dbReference type="KEGG" id="cya:CYA_2339"/>
<dbReference type="eggNOG" id="COG0442">
    <property type="taxonomic scope" value="Bacteria"/>
</dbReference>
<dbReference type="HOGENOM" id="CLU_016739_0_0_3"/>
<dbReference type="OrthoDB" id="9809052at2"/>
<dbReference type="Proteomes" id="UP000008818">
    <property type="component" value="Chromosome"/>
</dbReference>
<dbReference type="GO" id="GO:0005829">
    <property type="term" value="C:cytosol"/>
    <property type="evidence" value="ECO:0007669"/>
    <property type="project" value="TreeGrafter"/>
</dbReference>
<dbReference type="GO" id="GO:0002161">
    <property type="term" value="F:aminoacyl-tRNA deacylase activity"/>
    <property type="evidence" value="ECO:0007669"/>
    <property type="project" value="InterPro"/>
</dbReference>
<dbReference type="GO" id="GO:0005524">
    <property type="term" value="F:ATP binding"/>
    <property type="evidence" value="ECO:0007669"/>
    <property type="project" value="UniProtKB-UniRule"/>
</dbReference>
<dbReference type="GO" id="GO:0004827">
    <property type="term" value="F:proline-tRNA ligase activity"/>
    <property type="evidence" value="ECO:0007669"/>
    <property type="project" value="UniProtKB-UniRule"/>
</dbReference>
<dbReference type="GO" id="GO:0006433">
    <property type="term" value="P:prolyl-tRNA aminoacylation"/>
    <property type="evidence" value="ECO:0007669"/>
    <property type="project" value="UniProtKB-UniRule"/>
</dbReference>
<dbReference type="CDD" id="cd04334">
    <property type="entry name" value="ProRS-INS"/>
    <property type="match status" value="1"/>
</dbReference>
<dbReference type="CDD" id="cd00861">
    <property type="entry name" value="ProRS_anticodon_short"/>
    <property type="match status" value="1"/>
</dbReference>
<dbReference type="CDD" id="cd00779">
    <property type="entry name" value="ProRS_core_prok"/>
    <property type="match status" value="1"/>
</dbReference>
<dbReference type="FunFam" id="3.40.50.800:FF:000011">
    <property type="entry name" value="Proline--tRNA ligase"/>
    <property type="match status" value="1"/>
</dbReference>
<dbReference type="Gene3D" id="3.40.50.800">
    <property type="entry name" value="Anticodon-binding domain"/>
    <property type="match status" value="1"/>
</dbReference>
<dbReference type="Gene3D" id="3.30.930.10">
    <property type="entry name" value="Bira Bifunctional Protein, Domain 2"/>
    <property type="match status" value="2"/>
</dbReference>
<dbReference type="HAMAP" id="MF_01569">
    <property type="entry name" value="Pro_tRNA_synth_type1"/>
    <property type="match status" value="1"/>
</dbReference>
<dbReference type="InterPro" id="IPR002314">
    <property type="entry name" value="aa-tRNA-synt_IIb"/>
</dbReference>
<dbReference type="InterPro" id="IPR006195">
    <property type="entry name" value="aa-tRNA-synth_II"/>
</dbReference>
<dbReference type="InterPro" id="IPR045864">
    <property type="entry name" value="aa-tRNA-synth_II/BPL/LPL"/>
</dbReference>
<dbReference type="InterPro" id="IPR004154">
    <property type="entry name" value="Anticodon-bd"/>
</dbReference>
<dbReference type="InterPro" id="IPR036621">
    <property type="entry name" value="Anticodon-bd_dom_sf"/>
</dbReference>
<dbReference type="InterPro" id="IPR002316">
    <property type="entry name" value="Pro-tRNA-ligase_IIa"/>
</dbReference>
<dbReference type="InterPro" id="IPR004500">
    <property type="entry name" value="Pro-tRNA-synth_IIa_bac-type"/>
</dbReference>
<dbReference type="InterPro" id="IPR023717">
    <property type="entry name" value="Pro-tRNA-Synthase_IIa_type1"/>
</dbReference>
<dbReference type="InterPro" id="IPR050062">
    <property type="entry name" value="Pro-tRNA_synthetase"/>
</dbReference>
<dbReference type="InterPro" id="IPR044140">
    <property type="entry name" value="ProRS_anticodon_short"/>
</dbReference>
<dbReference type="InterPro" id="IPR033730">
    <property type="entry name" value="ProRS_core_prok"/>
</dbReference>
<dbReference type="InterPro" id="IPR036754">
    <property type="entry name" value="YbaK/aa-tRNA-synt-asso_dom_sf"/>
</dbReference>
<dbReference type="InterPro" id="IPR007214">
    <property type="entry name" value="YbaK/aa-tRNA-synth-assoc-dom"/>
</dbReference>
<dbReference type="NCBIfam" id="NF006625">
    <property type="entry name" value="PRK09194.1"/>
    <property type="match status" value="1"/>
</dbReference>
<dbReference type="NCBIfam" id="TIGR00409">
    <property type="entry name" value="proS_fam_II"/>
    <property type="match status" value="1"/>
</dbReference>
<dbReference type="PANTHER" id="PTHR42753">
    <property type="entry name" value="MITOCHONDRIAL RIBOSOME PROTEIN L39/PROLYL-TRNA LIGASE FAMILY MEMBER"/>
    <property type="match status" value="1"/>
</dbReference>
<dbReference type="PANTHER" id="PTHR42753:SF2">
    <property type="entry name" value="PROLINE--TRNA LIGASE"/>
    <property type="match status" value="1"/>
</dbReference>
<dbReference type="Pfam" id="PF03129">
    <property type="entry name" value="HGTP_anticodon"/>
    <property type="match status" value="1"/>
</dbReference>
<dbReference type="Pfam" id="PF00587">
    <property type="entry name" value="tRNA-synt_2b"/>
    <property type="match status" value="1"/>
</dbReference>
<dbReference type="Pfam" id="PF04073">
    <property type="entry name" value="tRNA_edit"/>
    <property type="match status" value="1"/>
</dbReference>
<dbReference type="PRINTS" id="PR01046">
    <property type="entry name" value="TRNASYNTHPRO"/>
</dbReference>
<dbReference type="SUPFAM" id="SSF52954">
    <property type="entry name" value="Class II aaRS ABD-related"/>
    <property type="match status" value="1"/>
</dbReference>
<dbReference type="SUPFAM" id="SSF55681">
    <property type="entry name" value="Class II aaRS and biotin synthetases"/>
    <property type="match status" value="1"/>
</dbReference>
<dbReference type="SUPFAM" id="SSF55826">
    <property type="entry name" value="YbaK/ProRS associated domain"/>
    <property type="match status" value="1"/>
</dbReference>
<dbReference type="PROSITE" id="PS50862">
    <property type="entry name" value="AA_TRNA_LIGASE_II"/>
    <property type="match status" value="1"/>
</dbReference>
<reference key="1">
    <citation type="journal article" date="2007" name="ISME J.">
        <title>Population level functional diversity in a microbial community revealed by comparative genomic and metagenomic analyses.</title>
        <authorList>
            <person name="Bhaya D."/>
            <person name="Grossman A.R."/>
            <person name="Steunou A.-S."/>
            <person name="Khuri N."/>
            <person name="Cohan F.M."/>
            <person name="Hamamura N."/>
            <person name="Melendrez M.C."/>
            <person name="Bateson M.M."/>
            <person name="Ward D.M."/>
            <person name="Heidelberg J.F."/>
        </authorList>
    </citation>
    <scope>NUCLEOTIDE SEQUENCE [LARGE SCALE GENOMIC DNA]</scope>
    <source>
        <strain>JA-3-3Ab</strain>
    </source>
</reference>
<proteinExistence type="inferred from homology"/>
<keyword id="KW-0030">Aminoacyl-tRNA synthetase</keyword>
<keyword id="KW-0067">ATP-binding</keyword>
<keyword id="KW-0963">Cytoplasm</keyword>
<keyword id="KW-0436">Ligase</keyword>
<keyword id="KW-0547">Nucleotide-binding</keyword>
<keyword id="KW-0648">Protein biosynthesis</keyword>
<accession>Q2JSB6</accession>
<name>SYP_SYNJA</name>